<dbReference type="EC" id="1.1.1.302"/>
<dbReference type="EMBL" id="AE000666">
    <property type="protein sequence ID" value="AAB84741.1"/>
    <property type="molecule type" value="Genomic_DNA"/>
</dbReference>
<dbReference type="PIR" id="C69129">
    <property type="entry name" value="C69129"/>
</dbReference>
<dbReference type="RefSeq" id="WP_010875874.1">
    <property type="nucleotide sequence ID" value="NC_000916.1"/>
</dbReference>
<dbReference type="PDB" id="6P8C">
    <property type="method" value="X-ray"/>
    <property type="resolution" value="2.07 A"/>
    <property type="chains" value="A/B=1-216"/>
</dbReference>
<dbReference type="PDBsum" id="6P8C"/>
<dbReference type="SMR" id="O26337"/>
<dbReference type="FunCoup" id="O26337">
    <property type="interactions" value="101"/>
</dbReference>
<dbReference type="STRING" id="187420.MTH_235"/>
<dbReference type="PaxDb" id="187420-MTH_235"/>
<dbReference type="EnsemblBacteria" id="AAB84741">
    <property type="protein sequence ID" value="AAB84741"/>
    <property type="gene ID" value="MTH_235"/>
</dbReference>
<dbReference type="KEGG" id="mth:MTH_235"/>
<dbReference type="PATRIC" id="fig|187420.15.peg.204"/>
<dbReference type="HOGENOM" id="CLU_036590_4_1_2"/>
<dbReference type="InParanoid" id="O26337"/>
<dbReference type="UniPathway" id="UPA00275"/>
<dbReference type="Proteomes" id="UP000005223">
    <property type="component" value="Chromosome"/>
</dbReference>
<dbReference type="GO" id="GO:0008703">
    <property type="term" value="F:5-amino-6-(5-phosphoribosylamino)uracil reductase activity"/>
    <property type="evidence" value="ECO:0007669"/>
    <property type="project" value="InterPro"/>
</dbReference>
<dbReference type="GO" id="GO:0050661">
    <property type="term" value="F:NADP binding"/>
    <property type="evidence" value="ECO:0007669"/>
    <property type="project" value="InterPro"/>
</dbReference>
<dbReference type="GO" id="GO:0009231">
    <property type="term" value="P:riboflavin biosynthetic process"/>
    <property type="evidence" value="ECO:0007669"/>
    <property type="project" value="UniProtKB-UniPathway"/>
</dbReference>
<dbReference type="Gene3D" id="3.40.430.10">
    <property type="entry name" value="Dihydrofolate Reductase, subunit A"/>
    <property type="match status" value="1"/>
</dbReference>
<dbReference type="InterPro" id="IPR024072">
    <property type="entry name" value="DHFR-like_dom_sf"/>
</dbReference>
<dbReference type="InterPro" id="IPR006401">
    <property type="entry name" value="Rib_reduct_arc"/>
</dbReference>
<dbReference type="InterPro" id="IPR011549">
    <property type="entry name" value="RibD_C"/>
</dbReference>
<dbReference type="InterPro" id="IPR002734">
    <property type="entry name" value="RibDG_C"/>
</dbReference>
<dbReference type="InterPro" id="IPR050765">
    <property type="entry name" value="Riboflavin_Biosynth_HTPR"/>
</dbReference>
<dbReference type="NCBIfam" id="TIGR01508">
    <property type="entry name" value="rib_reduct_arch"/>
    <property type="match status" value="1"/>
</dbReference>
<dbReference type="NCBIfam" id="TIGR00227">
    <property type="entry name" value="ribD_Cterm"/>
    <property type="match status" value="1"/>
</dbReference>
<dbReference type="PANTHER" id="PTHR38011:SF7">
    <property type="entry name" value="2,5-DIAMINO-6-RIBOSYLAMINO-4(3H)-PYRIMIDINONE 5'-PHOSPHATE REDUCTASE"/>
    <property type="match status" value="1"/>
</dbReference>
<dbReference type="PANTHER" id="PTHR38011">
    <property type="entry name" value="DIHYDROFOLATE REDUCTASE FAMILY PROTEIN (AFU_ORTHOLOGUE AFUA_8G06820)"/>
    <property type="match status" value="1"/>
</dbReference>
<dbReference type="Pfam" id="PF01872">
    <property type="entry name" value="RibD_C"/>
    <property type="match status" value="1"/>
</dbReference>
<dbReference type="SUPFAM" id="SSF53597">
    <property type="entry name" value="Dihydrofolate reductase-like"/>
    <property type="match status" value="1"/>
</dbReference>
<gene>
    <name type="ordered locus">MTH_235</name>
</gene>
<name>RIB7_METTH</name>
<keyword id="KW-0002">3D-structure</keyword>
<keyword id="KW-0521">NADP</keyword>
<keyword id="KW-0560">Oxidoreductase</keyword>
<keyword id="KW-1185">Reference proteome</keyword>
<keyword id="KW-0686">Riboflavin biosynthesis</keyword>
<protein>
    <recommendedName>
        <fullName>2,5-diamino-6-ribosylamino-4(3H)-pyrimidinone 5'-phosphate reductase</fullName>
        <shortName>DAROPP reductase</shortName>
        <shortName>DARP reductase</shortName>
        <ecNumber>1.1.1.302</ecNumber>
    </recommendedName>
    <alternativeName>
        <fullName>2,5-diamino-6-(5-phospho-D-ribosylamino)pyrimidin-4(3H)-one reductase</fullName>
    </alternativeName>
    <alternativeName>
        <fullName>2,5-diamino-6-ribitylamino-4(3H)-pyrimidinone 5'-phosphate synthase</fullName>
        <shortName>DARIPP synthase</shortName>
    </alternativeName>
</protein>
<evidence type="ECO:0000250" key="1"/>
<evidence type="ECO:0000305" key="2"/>
<evidence type="ECO:0007829" key="3">
    <source>
        <dbReference type="PDB" id="6P8C"/>
    </source>
</evidence>
<comment type="function">
    <text evidence="1">Catalyzes an early step in riboflavin biosynthesis, the NADPH-dependent reduction of the ribose side chain of 2,5-diamino-6-ribosylamino-4(3H)-pyrimidinone 5'-phosphate, yielding 2,5-diamino-6-ribitylamino-4(3H)-pyrimidinone 5'-phosphate.</text>
</comment>
<comment type="catalytic activity">
    <reaction>
        <text>2,5-diamino-6-(1-D-ribitylamino)pyrimidin-4(3H)-one 5'-phosphate + NADP(+) = 2,5-diamino-6-(1-D-ribosylamino)pyrimidin-4(3H)-one 5'-phosphate + NADPH + H(+)</text>
        <dbReference type="Rhea" id="RHEA:27278"/>
        <dbReference type="ChEBI" id="CHEBI:15378"/>
        <dbReference type="ChEBI" id="CHEBI:57783"/>
        <dbReference type="ChEBI" id="CHEBI:58349"/>
        <dbReference type="ChEBI" id="CHEBI:58890"/>
        <dbReference type="ChEBI" id="CHEBI:59545"/>
        <dbReference type="EC" id="1.1.1.302"/>
    </reaction>
</comment>
<comment type="catalytic activity">
    <reaction>
        <text>2,5-diamino-6-(1-D-ribitylamino)pyrimidin-4(3H)-one 5'-phosphate + NAD(+) = 2,5-diamino-6-(1-D-ribosylamino)pyrimidin-4(3H)-one 5'-phosphate + NADH + H(+)</text>
        <dbReference type="Rhea" id="RHEA:27274"/>
        <dbReference type="ChEBI" id="CHEBI:15378"/>
        <dbReference type="ChEBI" id="CHEBI:57540"/>
        <dbReference type="ChEBI" id="CHEBI:57945"/>
        <dbReference type="ChEBI" id="CHEBI:58890"/>
        <dbReference type="ChEBI" id="CHEBI:59545"/>
        <dbReference type="EC" id="1.1.1.302"/>
    </reaction>
</comment>
<comment type="pathway">
    <text>Cofactor biosynthesis; riboflavin biosynthesis.</text>
</comment>
<comment type="subunit">
    <text evidence="1">Homodimer.</text>
</comment>
<comment type="similarity">
    <text evidence="2">Belongs to the HTP reductase family.</text>
</comment>
<sequence>MRPYVILNAAMTLDGKIATATGSSEISGEEDLRRVHELRRECDAIMVGINTVLADDPRLTVHRVDAAPGDNPVRVVVDSMARTPPHFRVLNDEAPTVIGVSESAPPERVAELRKRAEVVVAGTRRVDLHLLLERLHGMGIERLMLEGGSTLNYSMLTGGLVDEVRVCIAPMIVGGRDARTLVDGEGIDEMADAIRLELKRSYTLGEDLIVEYTVKG</sequence>
<organism>
    <name type="scientific">Methanothermobacter thermautotrophicus (strain ATCC 29096 / DSM 1053 / JCM 10044 / NBRC 100330 / Delta H)</name>
    <name type="common">Methanobacterium thermoautotrophicum</name>
    <dbReference type="NCBI Taxonomy" id="187420"/>
    <lineage>
        <taxon>Archaea</taxon>
        <taxon>Methanobacteriati</taxon>
        <taxon>Methanobacteriota</taxon>
        <taxon>Methanomada group</taxon>
        <taxon>Methanobacteria</taxon>
        <taxon>Methanobacteriales</taxon>
        <taxon>Methanobacteriaceae</taxon>
        <taxon>Methanothermobacter</taxon>
    </lineage>
</organism>
<proteinExistence type="evidence at protein level"/>
<reference key="1">
    <citation type="journal article" date="1997" name="J. Bacteriol.">
        <title>Complete genome sequence of Methanobacterium thermoautotrophicum deltaH: functional analysis and comparative genomics.</title>
        <authorList>
            <person name="Smith D.R."/>
            <person name="Doucette-Stamm L.A."/>
            <person name="Deloughery C."/>
            <person name="Lee H.-M."/>
            <person name="Dubois J."/>
            <person name="Aldredge T."/>
            <person name="Bashirzadeh R."/>
            <person name="Blakely D."/>
            <person name="Cook R."/>
            <person name="Gilbert K."/>
            <person name="Harrison D."/>
            <person name="Hoang L."/>
            <person name="Keagle P."/>
            <person name="Lumm W."/>
            <person name="Pothier B."/>
            <person name="Qiu D."/>
            <person name="Spadafora R."/>
            <person name="Vicare R."/>
            <person name="Wang Y."/>
            <person name="Wierzbowski J."/>
            <person name="Gibson R."/>
            <person name="Jiwani N."/>
            <person name="Caruso A."/>
            <person name="Bush D."/>
            <person name="Safer H."/>
            <person name="Patwell D."/>
            <person name="Prabhakar S."/>
            <person name="McDougall S."/>
            <person name="Shimer G."/>
            <person name="Goyal A."/>
            <person name="Pietrovski S."/>
            <person name="Church G.M."/>
            <person name="Daniels C.J."/>
            <person name="Mao J.-I."/>
            <person name="Rice P."/>
            <person name="Noelling J."/>
            <person name="Reeve J.N."/>
        </authorList>
    </citation>
    <scope>NUCLEOTIDE SEQUENCE [LARGE SCALE GENOMIC DNA]</scope>
    <source>
        <strain>ATCC 29096 / DSM 1053 / JCM 10044 / NBRC 100330 / Delta H</strain>
    </source>
</reference>
<feature type="chain" id="PRO_0000135945" description="2,5-diamino-6-ribosylamino-4(3H)-pyrimidinone 5'-phosphate reductase">
    <location>
        <begin position="1"/>
        <end position="216"/>
    </location>
</feature>
<feature type="binding site" evidence="1">
    <location>
        <position position="51"/>
    </location>
    <ligand>
        <name>NADP(+)</name>
        <dbReference type="ChEBI" id="CHEBI:58349"/>
    </ligand>
</feature>
<feature type="binding site" evidence="1">
    <location>
        <position position="55"/>
    </location>
    <ligand>
        <name>NADP(+)</name>
        <dbReference type="ChEBI" id="CHEBI:58349"/>
    </ligand>
</feature>
<feature type="binding site" evidence="1">
    <location>
        <begin position="79"/>
        <end position="82"/>
    </location>
    <ligand>
        <name>NADP(+)</name>
        <dbReference type="ChEBI" id="CHEBI:58349"/>
    </ligand>
</feature>
<feature type="binding site" evidence="1">
    <location>
        <position position="126"/>
    </location>
    <ligand>
        <name>NADP(+)</name>
        <dbReference type="ChEBI" id="CHEBI:58349"/>
    </ligand>
</feature>
<feature type="binding site" evidence="1">
    <location>
        <begin position="148"/>
        <end position="151"/>
    </location>
    <ligand>
        <name>NADP(+)</name>
        <dbReference type="ChEBI" id="CHEBI:58349"/>
    </ligand>
</feature>
<feature type="strand" evidence="3">
    <location>
        <begin position="4"/>
        <end position="12"/>
    </location>
</feature>
<feature type="strand" evidence="3">
    <location>
        <begin position="16"/>
        <end position="18"/>
    </location>
</feature>
<feature type="helix" evidence="3">
    <location>
        <begin position="29"/>
        <end position="40"/>
    </location>
</feature>
<feature type="strand" evidence="3">
    <location>
        <begin position="42"/>
        <end position="48"/>
    </location>
</feature>
<feature type="helix" evidence="3">
    <location>
        <begin position="49"/>
        <end position="55"/>
    </location>
</feature>
<feature type="helix" evidence="3">
    <location>
        <begin position="68"/>
        <end position="70"/>
    </location>
</feature>
<feature type="strand" evidence="3">
    <location>
        <begin position="73"/>
        <end position="77"/>
    </location>
</feature>
<feature type="helix" evidence="3">
    <location>
        <begin position="88"/>
        <end position="90"/>
    </location>
</feature>
<feature type="strand" evidence="3">
    <location>
        <begin position="91"/>
        <end position="94"/>
    </location>
</feature>
<feature type="strand" evidence="3">
    <location>
        <begin position="96"/>
        <end position="100"/>
    </location>
</feature>
<feature type="helix" evidence="3">
    <location>
        <begin position="106"/>
        <end position="112"/>
    </location>
</feature>
<feature type="turn" evidence="3">
    <location>
        <begin position="113"/>
        <end position="115"/>
    </location>
</feature>
<feature type="strand" evidence="3">
    <location>
        <begin position="116"/>
        <end position="120"/>
    </location>
</feature>
<feature type="strand" evidence="3">
    <location>
        <begin position="122"/>
        <end position="125"/>
    </location>
</feature>
<feature type="helix" evidence="3">
    <location>
        <begin position="128"/>
        <end position="136"/>
    </location>
</feature>
<feature type="turn" evidence="3">
    <location>
        <begin position="137"/>
        <end position="139"/>
    </location>
</feature>
<feature type="strand" evidence="3">
    <location>
        <begin position="142"/>
        <end position="145"/>
    </location>
</feature>
<feature type="helix" evidence="3">
    <location>
        <begin position="149"/>
        <end position="157"/>
    </location>
</feature>
<feature type="strand" evidence="3">
    <location>
        <begin position="162"/>
        <end position="172"/>
    </location>
</feature>
<feature type="strand" evidence="3">
    <location>
        <begin position="178"/>
        <end position="182"/>
    </location>
</feature>
<feature type="helix" evidence="3">
    <location>
        <begin position="190"/>
        <end position="192"/>
    </location>
</feature>
<feature type="strand" evidence="3">
    <location>
        <begin position="194"/>
        <end position="204"/>
    </location>
</feature>
<feature type="strand" evidence="3">
    <location>
        <begin position="207"/>
        <end position="216"/>
    </location>
</feature>
<accession>O26337</accession>